<protein>
    <recommendedName>
        <fullName>Protein SCM3</fullName>
    </recommendedName>
    <alternativeName>
        <fullName>Suppressor of chromosome missegregation protein 3</fullName>
    </alternativeName>
</protein>
<evidence type="ECO:0000250" key="1">
    <source>
        <dbReference type="UniProtKB" id="Q8NCD3"/>
    </source>
</evidence>
<evidence type="ECO:0000256" key="2">
    <source>
        <dbReference type="SAM" id="MobiDB-lite"/>
    </source>
</evidence>
<evidence type="ECO:0000269" key="3">
    <source>
    </source>
</evidence>
<evidence type="ECO:0000269" key="4">
    <source>
    </source>
</evidence>
<evidence type="ECO:0000269" key="5">
    <source>
    </source>
</evidence>
<evidence type="ECO:0000305" key="6"/>
<evidence type="ECO:0007829" key="7">
    <source>
        <dbReference type="PDB" id="2L5A"/>
    </source>
</evidence>
<proteinExistence type="evidence at protein level"/>
<name>SCM3_YEAST</name>
<gene>
    <name type="primary">SCM3</name>
    <name type="ordered locus">YDL139C</name>
    <name type="ORF">D2155</name>
</gene>
<organism>
    <name type="scientific">Saccharomyces cerevisiae (strain ATCC 204508 / S288c)</name>
    <name type="common">Baker's yeast</name>
    <dbReference type="NCBI Taxonomy" id="559292"/>
    <lineage>
        <taxon>Eukaryota</taxon>
        <taxon>Fungi</taxon>
        <taxon>Dikarya</taxon>
        <taxon>Ascomycota</taxon>
        <taxon>Saccharomycotina</taxon>
        <taxon>Saccharomycetes</taxon>
        <taxon>Saccharomycetales</taxon>
        <taxon>Saccharomycetaceae</taxon>
        <taxon>Saccharomyces</taxon>
    </lineage>
</organism>
<reference key="1">
    <citation type="journal article" date="1996" name="Yeast">
        <title>Analysis of a 26,756 bp segment from the left arm of yeast chromosome IV.</title>
        <authorList>
            <person name="Woelfl S."/>
            <person name="Haneman V."/>
            <person name="Saluz H.P."/>
        </authorList>
    </citation>
    <scope>NUCLEOTIDE SEQUENCE [GENOMIC DNA]</scope>
    <source>
        <strain>ATCC 96604 / S288c / FY1679</strain>
    </source>
</reference>
<reference key="2">
    <citation type="journal article" date="1997" name="Nature">
        <title>The nucleotide sequence of Saccharomyces cerevisiae chromosome IV.</title>
        <authorList>
            <person name="Jacq C."/>
            <person name="Alt-Moerbe J."/>
            <person name="Andre B."/>
            <person name="Arnold W."/>
            <person name="Bahr A."/>
            <person name="Ballesta J.P.G."/>
            <person name="Bargues M."/>
            <person name="Baron L."/>
            <person name="Becker A."/>
            <person name="Biteau N."/>
            <person name="Bloecker H."/>
            <person name="Blugeon C."/>
            <person name="Boskovic J."/>
            <person name="Brandt P."/>
            <person name="Brueckner M."/>
            <person name="Buitrago M.J."/>
            <person name="Coster F."/>
            <person name="Delaveau T."/>
            <person name="del Rey F."/>
            <person name="Dujon B."/>
            <person name="Eide L.G."/>
            <person name="Garcia-Cantalejo J.M."/>
            <person name="Goffeau A."/>
            <person name="Gomez-Peris A."/>
            <person name="Granotier C."/>
            <person name="Hanemann V."/>
            <person name="Hankeln T."/>
            <person name="Hoheisel J.D."/>
            <person name="Jaeger W."/>
            <person name="Jimenez A."/>
            <person name="Jonniaux J.-L."/>
            <person name="Kraemer C."/>
            <person name="Kuester H."/>
            <person name="Laamanen P."/>
            <person name="Legros Y."/>
            <person name="Louis E.J."/>
            <person name="Moeller-Rieker S."/>
            <person name="Monnet A."/>
            <person name="Moro M."/>
            <person name="Mueller-Auer S."/>
            <person name="Nussbaumer B."/>
            <person name="Paricio N."/>
            <person name="Paulin L."/>
            <person name="Perea J."/>
            <person name="Perez-Alonso M."/>
            <person name="Perez-Ortin J.E."/>
            <person name="Pohl T.M."/>
            <person name="Prydz H."/>
            <person name="Purnelle B."/>
            <person name="Rasmussen S.W."/>
            <person name="Remacha M.A."/>
            <person name="Revuelta J.L."/>
            <person name="Rieger M."/>
            <person name="Salom D."/>
            <person name="Saluz H.P."/>
            <person name="Saiz J.E."/>
            <person name="Saren A.-M."/>
            <person name="Schaefer M."/>
            <person name="Scharfe M."/>
            <person name="Schmidt E.R."/>
            <person name="Schneider C."/>
            <person name="Scholler P."/>
            <person name="Schwarz S."/>
            <person name="Soler-Mira A."/>
            <person name="Urrestarazu L.A."/>
            <person name="Verhasselt P."/>
            <person name="Vissers S."/>
            <person name="Voet M."/>
            <person name="Volckaert G."/>
            <person name="Wagner G."/>
            <person name="Wambutt R."/>
            <person name="Wedler E."/>
            <person name="Wedler H."/>
            <person name="Woelfl S."/>
            <person name="Harris D.E."/>
            <person name="Bowman S."/>
            <person name="Brown D."/>
            <person name="Churcher C.M."/>
            <person name="Connor R."/>
            <person name="Dedman K."/>
            <person name="Gentles S."/>
            <person name="Hamlin N."/>
            <person name="Hunt S."/>
            <person name="Jones L."/>
            <person name="McDonald S."/>
            <person name="Murphy L.D."/>
            <person name="Niblett D."/>
            <person name="Odell C."/>
            <person name="Oliver K."/>
            <person name="Rajandream M.A."/>
            <person name="Richards C."/>
            <person name="Shore L."/>
            <person name="Walsh S.V."/>
            <person name="Barrell B.G."/>
            <person name="Dietrich F.S."/>
            <person name="Mulligan J.T."/>
            <person name="Allen E."/>
            <person name="Araujo R."/>
            <person name="Aviles E."/>
            <person name="Berno A."/>
            <person name="Carpenter J."/>
            <person name="Chen E."/>
            <person name="Cherry J.M."/>
            <person name="Chung E."/>
            <person name="Duncan M."/>
            <person name="Hunicke-Smith S."/>
            <person name="Hyman R.W."/>
            <person name="Komp C."/>
            <person name="Lashkari D."/>
            <person name="Lew H."/>
            <person name="Lin D."/>
            <person name="Mosedale D."/>
            <person name="Nakahara K."/>
            <person name="Namath A."/>
            <person name="Oefner P."/>
            <person name="Oh C."/>
            <person name="Petel F.X."/>
            <person name="Roberts D."/>
            <person name="Schramm S."/>
            <person name="Schroeder M."/>
            <person name="Shogren T."/>
            <person name="Shroff N."/>
            <person name="Winant A."/>
            <person name="Yelton M.A."/>
            <person name="Botstein D."/>
            <person name="Davis R.W."/>
            <person name="Johnston M."/>
            <person name="Andrews S."/>
            <person name="Brinkman R."/>
            <person name="Cooper J."/>
            <person name="Ding H."/>
            <person name="Du Z."/>
            <person name="Favello A."/>
            <person name="Fulton L."/>
            <person name="Gattung S."/>
            <person name="Greco T."/>
            <person name="Hallsworth K."/>
            <person name="Hawkins J."/>
            <person name="Hillier L.W."/>
            <person name="Jier M."/>
            <person name="Johnson D."/>
            <person name="Johnston L."/>
            <person name="Kirsten J."/>
            <person name="Kucaba T."/>
            <person name="Langston Y."/>
            <person name="Latreille P."/>
            <person name="Le T."/>
            <person name="Mardis E."/>
            <person name="Menezes S."/>
            <person name="Miller N."/>
            <person name="Nhan M."/>
            <person name="Pauley A."/>
            <person name="Peluso D."/>
            <person name="Rifkin L."/>
            <person name="Riles L."/>
            <person name="Taich A."/>
            <person name="Trevaskis E."/>
            <person name="Vignati D."/>
            <person name="Wilcox L."/>
            <person name="Wohldman P."/>
            <person name="Vaudin M."/>
            <person name="Wilson R."/>
            <person name="Waterston R."/>
            <person name="Albermann K."/>
            <person name="Hani J."/>
            <person name="Heumann K."/>
            <person name="Kleine K."/>
            <person name="Mewes H.-W."/>
            <person name="Zollner A."/>
            <person name="Zaccaria P."/>
        </authorList>
    </citation>
    <scope>NUCLEOTIDE SEQUENCE [LARGE SCALE GENOMIC DNA]</scope>
    <source>
        <strain>ATCC 204508 / S288c</strain>
    </source>
</reference>
<reference key="3">
    <citation type="journal article" date="2014" name="G3 (Bethesda)">
        <title>The reference genome sequence of Saccharomyces cerevisiae: Then and now.</title>
        <authorList>
            <person name="Engel S.R."/>
            <person name="Dietrich F.S."/>
            <person name="Fisk D.G."/>
            <person name="Binkley G."/>
            <person name="Balakrishnan R."/>
            <person name="Costanzo M.C."/>
            <person name="Dwight S.S."/>
            <person name="Hitz B.C."/>
            <person name="Karra K."/>
            <person name="Nash R.S."/>
            <person name="Weng S."/>
            <person name="Wong E.D."/>
            <person name="Lloyd P."/>
            <person name="Skrzypek M.S."/>
            <person name="Miyasato S.R."/>
            <person name="Simison M."/>
            <person name="Cherry J.M."/>
        </authorList>
    </citation>
    <scope>GENOME REANNOTATION</scope>
    <source>
        <strain>ATCC 204508 / S288c</strain>
    </source>
</reference>
<reference key="4">
    <citation type="journal article" date="2007" name="Genome Res.">
        <title>Approaching a complete repository of sequence-verified protein-encoding clones for Saccharomyces cerevisiae.</title>
        <authorList>
            <person name="Hu Y."/>
            <person name="Rolfs A."/>
            <person name="Bhullar B."/>
            <person name="Murthy T.V.S."/>
            <person name="Zhu C."/>
            <person name="Berger M.F."/>
            <person name="Camargo A.A."/>
            <person name="Kelley F."/>
            <person name="McCarron S."/>
            <person name="Jepson D."/>
            <person name="Richardson A."/>
            <person name="Raphael J."/>
            <person name="Moreira D."/>
            <person name="Taycher E."/>
            <person name="Zuo D."/>
            <person name="Mohr S."/>
            <person name="Kane M.F."/>
            <person name="Williamson J."/>
            <person name="Simpson A.J.G."/>
            <person name="Bulyk M.L."/>
            <person name="Harlow E."/>
            <person name="Marsischky G."/>
            <person name="Kolodner R.D."/>
            <person name="LaBaer J."/>
        </authorList>
    </citation>
    <scope>NUCLEOTIDE SEQUENCE [GENOMIC DNA]</scope>
    <source>
        <strain>ATCC 204508 / S288c</strain>
    </source>
</reference>
<reference key="5">
    <citation type="journal article" date="2003" name="Nature">
        <title>Sequencing and comparison of yeast species to identify genes and regulatory elements.</title>
        <authorList>
            <person name="Kellis M."/>
            <person name="Patterson N."/>
            <person name="Endrizzi M."/>
            <person name="Birren B.W."/>
            <person name="Lander E.S."/>
        </authorList>
    </citation>
    <scope>IDENTIFICATION OF PROBABLE INITIATION SITE</scope>
</reference>
<reference key="6">
    <citation type="journal article" date="2003" name="Nature">
        <title>Global analysis of protein localization in budding yeast.</title>
        <authorList>
            <person name="Huh W.-K."/>
            <person name="Falvo J.V."/>
            <person name="Gerke L.C."/>
            <person name="Carroll A.S."/>
            <person name="Howson R.W."/>
            <person name="Weissman J.S."/>
            <person name="O'Shea E.K."/>
        </authorList>
    </citation>
    <scope>SUBCELLULAR LOCATION [LARGE SCALE ANALYSIS]</scope>
</reference>
<reference key="7">
    <citation type="journal article" date="2003" name="Nature">
        <title>Global analysis of protein expression in yeast.</title>
        <authorList>
            <person name="Ghaemmaghami S."/>
            <person name="Huh W.-K."/>
            <person name="Bower K."/>
            <person name="Howson R.W."/>
            <person name="Belle A."/>
            <person name="Dephoure N."/>
            <person name="O'Shea E.K."/>
            <person name="Weissman J.S."/>
        </authorList>
    </citation>
    <scope>LEVEL OF PROTEIN EXPRESSION [LARGE SCALE ANALYSIS]</scope>
</reference>
<reference key="8">
    <citation type="journal article" date="2012" name="Proc. Natl. Acad. Sci. U.S.A.">
        <title>N-terminal acetylome analyses and functional insights of the N-terminal acetyltransferase NatB.</title>
        <authorList>
            <person name="Van Damme P."/>
            <person name="Lasa M."/>
            <person name="Polevoda B."/>
            <person name="Gazquez C."/>
            <person name="Elosegui-Artola A."/>
            <person name="Kim D.S."/>
            <person name="De Juan-Pardo E."/>
            <person name="Demeyer K."/>
            <person name="Hole K."/>
            <person name="Larrea E."/>
            <person name="Timmerman E."/>
            <person name="Prieto J."/>
            <person name="Arnesen T."/>
            <person name="Sherman F."/>
            <person name="Gevaert K."/>
            <person name="Aldabe R."/>
        </authorList>
    </citation>
    <scope>IDENTIFICATION BY MASS SPECTROMETRY [LARGE SCALE ANALYSIS]</scope>
</reference>
<reference key="9">
    <citation type="journal article" date="2020" name="Proc. Natl. Acad. Sci. U.S.A.">
        <title>The ATAD2/ANCCA homolog Yta7 cooperates with Scm3HJURP to deposit Cse4CENP-A at the centromere in yeast.</title>
        <authorList>
            <person name="Shahnejat-Bushehri S."/>
            <person name="Ehrenhofer-Murray A.E."/>
        </authorList>
    </citation>
    <scope>INTERACTION WITH YTA7</scope>
</reference>
<comment type="function">
    <text evidence="1">Centromeric protein that plays a central role in the incorporation and maintenance of histone H3-like variant CENPA at centromeres.</text>
</comment>
<comment type="subunit">
    <text evidence="5">Interacts with YTA7.</text>
</comment>
<comment type="interaction">
    <interactant intactId="EBI-31788">
        <id>Q12334</id>
    </interactant>
    <interactant intactId="EBI-5182">
        <id>P36012</id>
        <label>CSE4</label>
    </interactant>
    <organismsDiffer>false</organismsDiffer>
    <experiments>5</experiments>
</comment>
<comment type="subcellular location">
    <subcellularLocation>
        <location evidence="3">Nucleus</location>
    </subcellularLocation>
</comment>
<comment type="miscellaneous">
    <text evidence="4">Present with 556 molecules/cell in log phase SD medium.</text>
</comment>
<comment type="sequence caution" evidence="6">
    <conflict type="erroneous initiation">
        <sequence resource="EMBL-CDS" id="AAS56490"/>
    </conflict>
</comment>
<comment type="sequence caution" evidence="6">
    <conflict type="erroneous initiation">
        <sequence resource="EMBL-CDS" id="CAA65620"/>
    </conflict>
</comment>
<comment type="sequence caution" evidence="6">
    <conflict type="erroneous initiation">
        <sequence resource="EMBL-CDS" id="CAA98712"/>
    </conflict>
</comment>
<dbReference type="EMBL" id="X96876">
    <property type="protein sequence ID" value="CAA65620.1"/>
    <property type="status" value="ALT_INIT"/>
    <property type="molecule type" value="Genomic_DNA"/>
</dbReference>
<dbReference type="EMBL" id="Z74187">
    <property type="protein sequence ID" value="CAA98712.1"/>
    <property type="status" value="ALT_INIT"/>
    <property type="molecule type" value="Genomic_DNA"/>
</dbReference>
<dbReference type="EMBL" id="AY558164">
    <property type="protein sequence ID" value="AAS56490.1"/>
    <property type="status" value="ALT_INIT"/>
    <property type="molecule type" value="Genomic_DNA"/>
</dbReference>
<dbReference type="EMBL" id="BK006938">
    <property type="protein sequence ID" value="DAA11719.1"/>
    <property type="molecule type" value="Genomic_DNA"/>
</dbReference>
<dbReference type="PIR" id="S67685">
    <property type="entry name" value="S67685"/>
</dbReference>
<dbReference type="RefSeq" id="NP_010142.2">
    <property type="nucleotide sequence ID" value="NM_001180199.1"/>
</dbReference>
<dbReference type="PDB" id="2L5A">
    <property type="method" value="NMR"/>
    <property type="chains" value="A=93-172"/>
</dbReference>
<dbReference type="PDBsum" id="2L5A"/>
<dbReference type="SMR" id="Q12334"/>
<dbReference type="BioGRID" id="31922">
    <property type="interactions" value="152"/>
</dbReference>
<dbReference type="DIP" id="DIP-5045N"/>
<dbReference type="FunCoup" id="Q12334">
    <property type="interactions" value="49"/>
</dbReference>
<dbReference type="IntAct" id="Q12334">
    <property type="interactions" value="10"/>
</dbReference>
<dbReference type="MINT" id="Q12334"/>
<dbReference type="STRING" id="4932.YDL139C"/>
<dbReference type="iPTMnet" id="Q12334"/>
<dbReference type="PaxDb" id="4932-YDL139C"/>
<dbReference type="PeptideAtlas" id="Q12334"/>
<dbReference type="EnsemblFungi" id="YDL139C_mRNA">
    <property type="protein sequence ID" value="YDL139C"/>
    <property type="gene ID" value="YDL139C"/>
</dbReference>
<dbReference type="GeneID" id="851416"/>
<dbReference type="KEGG" id="sce:YDL139C"/>
<dbReference type="AGR" id="SGD:S000002298"/>
<dbReference type="SGD" id="S000002298">
    <property type="gene designation" value="SCM3"/>
</dbReference>
<dbReference type="VEuPathDB" id="FungiDB:YDL139C"/>
<dbReference type="eggNOG" id="ENOG502S4HZ">
    <property type="taxonomic scope" value="Eukaryota"/>
</dbReference>
<dbReference type="HOGENOM" id="CLU_106374_0_0_1"/>
<dbReference type="InParanoid" id="Q12334"/>
<dbReference type="OMA" id="WANDSEA"/>
<dbReference type="OrthoDB" id="2420608at2759"/>
<dbReference type="BioCyc" id="YEAST:G3O-29538-MONOMER"/>
<dbReference type="BioGRID-ORCS" id="851416">
    <property type="hits" value="5 hits in 10 CRISPR screens"/>
</dbReference>
<dbReference type="PRO" id="PR:Q12334"/>
<dbReference type="Proteomes" id="UP000002311">
    <property type="component" value="Chromosome IV"/>
</dbReference>
<dbReference type="RNAct" id="Q12334">
    <property type="molecule type" value="protein"/>
</dbReference>
<dbReference type="GO" id="GO:0000779">
    <property type="term" value="C:condensed chromosome, centromeric region"/>
    <property type="evidence" value="ECO:0000314"/>
    <property type="project" value="SGD"/>
</dbReference>
<dbReference type="GO" id="GO:0005737">
    <property type="term" value="C:cytoplasm"/>
    <property type="evidence" value="ECO:0007005"/>
    <property type="project" value="SGD"/>
</dbReference>
<dbReference type="GO" id="GO:0005634">
    <property type="term" value="C:nucleus"/>
    <property type="evidence" value="ECO:0007005"/>
    <property type="project" value="SGD"/>
</dbReference>
<dbReference type="GO" id="GO:0097030">
    <property type="term" value="F:CENP-A containing nucleosome binding"/>
    <property type="evidence" value="ECO:0000315"/>
    <property type="project" value="SGD"/>
</dbReference>
<dbReference type="GO" id="GO:0042393">
    <property type="term" value="F:histone binding"/>
    <property type="evidence" value="ECO:0007669"/>
    <property type="project" value="InterPro"/>
</dbReference>
<dbReference type="GO" id="GO:0007059">
    <property type="term" value="P:chromosome segregation"/>
    <property type="evidence" value="ECO:0000315"/>
    <property type="project" value="SGD"/>
</dbReference>
<dbReference type="GO" id="GO:0000086">
    <property type="term" value="P:G2/M transition of mitotic cell cycle"/>
    <property type="evidence" value="ECO:0000315"/>
    <property type="project" value="SGD"/>
</dbReference>
<dbReference type="GO" id="GO:0051382">
    <property type="term" value="P:kinetochore assembly"/>
    <property type="evidence" value="ECO:0000315"/>
    <property type="project" value="SGD"/>
</dbReference>
<dbReference type="GO" id="GO:2000059">
    <property type="term" value="P:negative regulation of ubiquitin-dependent protein catabolic process"/>
    <property type="evidence" value="ECO:0000314"/>
    <property type="project" value="SGD"/>
</dbReference>
<dbReference type="GO" id="GO:0071459">
    <property type="term" value="P:protein localization to chromosome, centromeric region"/>
    <property type="evidence" value="ECO:0000315"/>
    <property type="project" value="SGD"/>
</dbReference>
<dbReference type="Gene3D" id="6.10.250.2010">
    <property type="match status" value="1"/>
</dbReference>
<dbReference type="InterPro" id="IPR018465">
    <property type="entry name" value="Scm3/HJURP"/>
</dbReference>
<dbReference type="Pfam" id="PF10384">
    <property type="entry name" value="Scm3"/>
    <property type="match status" value="1"/>
</dbReference>
<keyword id="KW-0002">3D-structure</keyword>
<keyword id="KW-0539">Nucleus</keyword>
<keyword id="KW-1185">Reference proteome</keyword>
<accession>Q12334</accession>
<accession>D6VRK9</accession>
<feature type="chain" id="PRO_0000252298" description="Protein SCM3">
    <location>
        <begin position="1"/>
        <end position="223"/>
    </location>
</feature>
<feature type="region of interest" description="Disordered" evidence="2">
    <location>
        <begin position="1"/>
        <end position="48"/>
    </location>
</feature>
<feature type="region of interest" description="Disordered" evidence="2">
    <location>
        <begin position="168"/>
        <end position="202"/>
    </location>
</feature>
<feature type="compositionally biased region" description="Basic residues" evidence="2">
    <location>
        <begin position="1"/>
        <end position="14"/>
    </location>
</feature>
<feature type="compositionally biased region" description="Basic and acidic residues" evidence="2">
    <location>
        <begin position="23"/>
        <end position="40"/>
    </location>
</feature>
<feature type="compositionally biased region" description="Acidic residues" evidence="2">
    <location>
        <begin position="184"/>
        <end position="200"/>
    </location>
</feature>
<feature type="helix" evidence="7">
    <location>
        <begin position="94"/>
        <end position="114"/>
    </location>
</feature>
<feature type="strand" evidence="7">
    <location>
        <begin position="125"/>
        <end position="128"/>
    </location>
</feature>
<feature type="helix" evidence="7">
    <location>
        <begin position="146"/>
        <end position="148"/>
    </location>
</feature>
<feature type="helix" evidence="7">
    <location>
        <begin position="154"/>
        <end position="164"/>
    </location>
</feature>
<sequence>MKTNKKISKRRSLKNLHGALKGLLKESGKKSESKIRKHSDCNPVHRVYPPNIEKRKTKKDDGISRPIAERNGHVYIMSKENHIIPKLTDDEVMERHKLADENMRKVWSNIISKYESIEEQGDLVDLKTGEIVEDNGHIKTLTANNSTKDKRTKYTSVLRDIIDISDEEDGDKNDEYTLWANDSEASDSEVDADNDTEEEKDEKLIDADFKKYEAKLSKRILRD</sequence>